<feature type="chain" id="PRO_0000172184" description="Homoserine kinase">
    <location>
        <begin position="1"/>
        <end position="322"/>
    </location>
</feature>
<feature type="helix" evidence="2">
    <location>
        <begin position="9"/>
        <end position="16"/>
    </location>
</feature>
<feature type="strand" evidence="2">
    <location>
        <begin position="24"/>
        <end position="30"/>
    </location>
</feature>
<feature type="strand" evidence="2">
    <location>
        <begin position="36"/>
        <end position="45"/>
    </location>
</feature>
<feature type="strand" evidence="2">
    <location>
        <begin position="48"/>
        <end position="53"/>
    </location>
</feature>
<feature type="helix" evidence="2">
    <location>
        <begin position="61"/>
        <end position="74"/>
    </location>
</feature>
<feature type="strand" evidence="2">
    <location>
        <begin position="92"/>
        <end position="94"/>
    </location>
</feature>
<feature type="strand" evidence="2">
    <location>
        <begin position="97"/>
        <end position="103"/>
    </location>
</feature>
<feature type="helix" evidence="2">
    <location>
        <begin position="115"/>
        <end position="131"/>
    </location>
</feature>
<feature type="turn" evidence="2">
    <location>
        <begin position="132"/>
        <end position="134"/>
    </location>
</feature>
<feature type="helix" evidence="2">
    <location>
        <begin position="145"/>
        <end position="155"/>
    </location>
</feature>
<feature type="helix" evidence="2">
    <location>
        <begin position="156"/>
        <end position="161"/>
    </location>
</feature>
<feature type="helix" evidence="2">
    <location>
        <begin position="166"/>
        <end position="180"/>
    </location>
</feature>
<feature type="strand" evidence="2">
    <location>
        <begin position="187"/>
        <end position="190"/>
    </location>
</feature>
<feature type="helix" evidence="2">
    <location>
        <begin position="196"/>
        <end position="198"/>
    </location>
</feature>
<feature type="strand" evidence="2">
    <location>
        <begin position="199"/>
        <end position="202"/>
    </location>
</feature>
<feature type="strand" evidence="2">
    <location>
        <begin position="205"/>
        <end position="209"/>
    </location>
</feature>
<feature type="strand" evidence="2">
    <location>
        <begin position="216"/>
        <end position="219"/>
    </location>
</feature>
<feature type="helix" evidence="2">
    <location>
        <begin position="220"/>
        <end position="231"/>
    </location>
</feature>
<feature type="helix" evidence="2">
    <location>
        <begin position="241"/>
        <end position="252"/>
    </location>
</feature>
<feature type="helix" evidence="2">
    <location>
        <begin position="259"/>
        <end position="286"/>
    </location>
</feature>
<feature type="helix" evidence="2">
    <location>
        <begin position="299"/>
        <end position="309"/>
    </location>
</feature>
<feature type="helix" evidence="2">
    <location>
        <begin position="314"/>
        <end position="317"/>
    </location>
</feature>
<name>KHSE_AGRFC</name>
<protein>
    <recommendedName>
        <fullName evidence="1">Homoserine kinase</fullName>
        <shortName evidence="1">HK</shortName>
        <shortName evidence="1">HSK</shortName>
        <ecNumber evidence="1">2.7.1.39</ecNumber>
    </recommendedName>
</protein>
<reference key="1">
    <citation type="journal article" date="2001" name="Science">
        <title>The genome of the natural genetic engineer Agrobacterium tumefaciens C58.</title>
        <authorList>
            <person name="Wood D.W."/>
            <person name="Setubal J.C."/>
            <person name="Kaul R."/>
            <person name="Monks D.E."/>
            <person name="Kitajima J.P."/>
            <person name="Okura V.K."/>
            <person name="Zhou Y."/>
            <person name="Chen L."/>
            <person name="Wood G.E."/>
            <person name="Almeida N.F. Jr."/>
            <person name="Woo L."/>
            <person name="Chen Y."/>
            <person name="Paulsen I.T."/>
            <person name="Eisen J.A."/>
            <person name="Karp P.D."/>
            <person name="Bovee D. Sr."/>
            <person name="Chapman P."/>
            <person name="Clendenning J."/>
            <person name="Deatherage G."/>
            <person name="Gillet W."/>
            <person name="Grant C."/>
            <person name="Kutyavin T."/>
            <person name="Levy R."/>
            <person name="Li M.-J."/>
            <person name="McClelland E."/>
            <person name="Palmieri A."/>
            <person name="Raymond C."/>
            <person name="Rouse G."/>
            <person name="Saenphimmachak C."/>
            <person name="Wu Z."/>
            <person name="Romero P."/>
            <person name="Gordon D."/>
            <person name="Zhang S."/>
            <person name="Yoo H."/>
            <person name="Tao Y."/>
            <person name="Biddle P."/>
            <person name="Jung M."/>
            <person name="Krespan W."/>
            <person name="Perry M."/>
            <person name="Gordon-Kamm B."/>
            <person name="Liao L."/>
            <person name="Kim S."/>
            <person name="Hendrick C."/>
            <person name="Zhao Z.-Y."/>
            <person name="Dolan M."/>
            <person name="Chumley F."/>
            <person name="Tingey S.V."/>
            <person name="Tomb J.-F."/>
            <person name="Gordon M.P."/>
            <person name="Olson M.V."/>
            <person name="Nester E.W."/>
        </authorList>
    </citation>
    <scope>NUCLEOTIDE SEQUENCE [LARGE SCALE GENOMIC DNA]</scope>
    <source>
        <strain>C58 / ATCC 33970</strain>
    </source>
</reference>
<reference key="2">
    <citation type="journal article" date="2001" name="Science">
        <title>Genome sequence of the plant pathogen and biotechnology agent Agrobacterium tumefaciens C58.</title>
        <authorList>
            <person name="Goodner B."/>
            <person name="Hinkle G."/>
            <person name="Gattung S."/>
            <person name="Miller N."/>
            <person name="Blanchard M."/>
            <person name="Qurollo B."/>
            <person name="Goldman B.S."/>
            <person name="Cao Y."/>
            <person name="Askenazi M."/>
            <person name="Halling C."/>
            <person name="Mullin L."/>
            <person name="Houmiel K."/>
            <person name="Gordon J."/>
            <person name="Vaudin M."/>
            <person name="Iartchouk O."/>
            <person name="Epp A."/>
            <person name="Liu F."/>
            <person name="Wollam C."/>
            <person name="Allinger M."/>
            <person name="Doughty D."/>
            <person name="Scott C."/>
            <person name="Lappas C."/>
            <person name="Markelz B."/>
            <person name="Flanagan C."/>
            <person name="Crowell C."/>
            <person name="Gurson J."/>
            <person name="Lomo C."/>
            <person name="Sear C."/>
            <person name="Strub G."/>
            <person name="Cielo C."/>
            <person name="Slater S."/>
        </authorList>
    </citation>
    <scope>NUCLEOTIDE SEQUENCE [LARGE SCALE GENOMIC DNA]</scope>
    <source>
        <strain>C58 / ATCC 33970</strain>
    </source>
</reference>
<organism>
    <name type="scientific">Agrobacterium fabrum (strain C58 / ATCC 33970)</name>
    <name type="common">Agrobacterium tumefaciens (strain C58)</name>
    <dbReference type="NCBI Taxonomy" id="176299"/>
    <lineage>
        <taxon>Bacteria</taxon>
        <taxon>Pseudomonadati</taxon>
        <taxon>Pseudomonadota</taxon>
        <taxon>Alphaproteobacteria</taxon>
        <taxon>Hyphomicrobiales</taxon>
        <taxon>Rhizobiaceae</taxon>
        <taxon>Rhizobium/Agrobacterium group</taxon>
        <taxon>Agrobacterium</taxon>
        <taxon>Agrobacterium tumefaciens complex</taxon>
    </lineage>
</organism>
<gene>
    <name evidence="1" type="primary">thrB</name>
    <name type="ordered locus">Atu0775</name>
    <name type="ORF">AGR_C_1416</name>
</gene>
<dbReference type="EC" id="2.7.1.39" evidence="1"/>
<dbReference type="EMBL" id="AE007869">
    <property type="protein sequence ID" value="AAK86584.1"/>
    <property type="molecule type" value="Genomic_DNA"/>
</dbReference>
<dbReference type="PIR" id="AI2671">
    <property type="entry name" value="AI2671"/>
</dbReference>
<dbReference type="PIR" id="G97453">
    <property type="entry name" value="G97453"/>
</dbReference>
<dbReference type="RefSeq" id="NP_353799.1">
    <property type="nucleotide sequence ID" value="NC_003062.2"/>
</dbReference>
<dbReference type="RefSeq" id="WP_010971141.1">
    <property type="nucleotide sequence ID" value="NC_003062.2"/>
</dbReference>
<dbReference type="PDB" id="2PPQ">
    <property type="method" value="X-ray"/>
    <property type="resolution" value="2.00 A"/>
    <property type="chains" value="A=1-322"/>
</dbReference>
<dbReference type="PDBsum" id="2PPQ"/>
<dbReference type="SMR" id="Q8UHA8"/>
<dbReference type="STRING" id="176299.Atu0775"/>
<dbReference type="EnsemblBacteria" id="AAK86584">
    <property type="protein sequence ID" value="AAK86584"/>
    <property type="gene ID" value="Atu0775"/>
</dbReference>
<dbReference type="GeneID" id="1132813"/>
<dbReference type="KEGG" id="atu:Atu0775"/>
<dbReference type="PATRIC" id="fig|176299.10.peg.775"/>
<dbReference type="eggNOG" id="COG2334">
    <property type="taxonomic scope" value="Bacteria"/>
</dbReference>
<dbReference type="HOGENOM" id="CLU_053300_0_0_5"/>
<dbReference type="OrthoDB" id="9777460at2"/>
<dbReference type="PhylomeDB" id="Q8UHA8"/>
<dbReference type="BioCyc" id="AGRO:ATU0775-MONOMER"/>
<dbReference type="UniPathway" id="UPA00050">
    <property type="reaction ID" value="UER00064"/>
</dbReference>
<dbReference type="EvolutionaryTrace" id="Q8UHA8"/>
<dbReference type="Proteomes" id="UP000000813">
    <property type="component" value="Chromosome circular"/>
</dbReference>
<dbReference type="GO" id="GO:0005524">
    <property type="term" value="F:ATP binding"/>
    <property type="evidence" value="ECO:0007669"/>
    <property type="project" value="UniProtKB-KW"/>
</dbReference>
<dbReference type="GO" id="GO:0004413">
    <property type="term" value="F:homoserine kinase activity"/>
    <property type="evidence" value="ECO:0007669"/>
    <property type="project" value="UniProtKB-UniRule"/>
</dbReference>
<dbReference type="GO" id="GO:0009088">
    <property type="term" value="P:threonine biosynthetic process"/>
    <property type="evidence" value="ECO:0007669"/>
    <property type="project" value="UniProtKB-UniRule"/>
</dbReference>
<dbReference type="CDD" id="cd05153">
    <property type="entry name" value="HomoserineK_II"/>
    <property type="match status" value="1"/>
</dbReference>
<dbReference type="Gene3D" id="3.90.1200.10">
    <property type="match status" value="1"/>
</dbReference>
<dbReference type="Gene3D" id="3.30.200.20">
    <property type="entry name" value="Phosphorylase Kinase, domain 1"/>
    <property type="match status" value="1"/>
</dbReference>
<dbReference type="HAMAP" id="MF_00301">
    <property type="entry name" value="Homoser_kinase_2"/>
    <property type="match status" value="1"/>
</dbReference>
<dbReference type="InterPro" id="IPR002575">
    <property type="entry name" value="Aminoglycoside_PTrfase"/>
</dbReference>
<dbReference type="InterPro" id="IPR005280">
    <property type="entry name" value="Homoserine_kinase_II"/>
</dbReference>
<dbReference type="InterPro" id="IPR011009">
    <property type="entry name" value="Kinase-like_dom_sf"/>
</dbReference>
<dbReference type="InterPro" id="IPR050249">
    <property type="entry name" value="Pseudomonas-type_ThrB"/>
</dbReference>
<dbReference type="NCBIfam" id="NF003558">
    <property type="entry name" value="PRK05231.1"/>
    <property type="match status" value="1"/>
</dbReference>
<dbReference type="NCBIfam" id="TIGR00938">
    <property type="entry name" value="thrB_alt"/>
    <property type="match status" value="1"/>
</dbReference>
<dbReference type="PANTHER" id="PTHR21064:SF6">
    <property type="entry name" value="AMINOGLYCOSIDE PHOSPHOTRANSFERASE DOMAIN-CONTAINING PROTEIN"/>
    <property type="match status" value="1"/>
</dbReference>
<dbReference type="PANTHER" id="PTHR21064">
    <property type="entry name" value="AMINOGLYCOSIDE PHOSPHOTRANSFERASE DOMAIN-CONTAINING PROTEIN-RELATED"/>
    <property type="match status" value="1"/>
</dbReference>
<dbReference type="Pfam" id="PF01636">
    <property type="entry name" value="APH"/>
    <property type="match status" value="1"/>
</dbReference>
<dbReference type="SUPFAM" id="SSF56112">
    <property type="entry name" value="Protein kinase-like (PK-like)"/>
    <property type="match status" value="1"/>
</dbReference>
<keyword id="KW-0002">3D-structure</keyword>
<keyword id="KW-0028">Amino-acid biosynthesis</keyword>
<keyword id="KW-0067">ATP-binding</keyword>
<keyword id="KW-0418">Kinase</keyword>
<keyword id="KW-0547">Nucleotide-binding</keyword>
<keyword id="KW-1185">Reference proteome</keyword>
<keyword id="KW-0791">Threonine biosynthesis</keyword>
<keyword id="KW-0808">Transferase</keyword>
<accession>Q8UHA8</accession>
<sequence>MAVYTDITEDELRNFLTQYDVGSLTSYKGIAEGVENSNFLLHTTKDPLILTLYEKRVEKNDLPFFLGLMQHLAAKGLSCPLPLPRKDGELLGELSGRPAALISFLEGMWLRKPEAKHCREVGKALAAMHLASEGFEIKRPNALSVDGWKVLWDKSEERADEVEKGLREEIRPEIDYLAAHWPKDLPAGVIHADLFQDNVFFLGDELSGLIDFYFACNDLLAYDVSICLNAWCFEKDGAYNVTKGKALLEGYQSVRPLSEAELEALPLLSRGSALRFFLTRLYDWLTTPAGALVVKKDPLEYLRKLRFHRTIANVAEYGLAGE</sequence>
<proteinExistence type="evidence at protein level"/>
<comment type="catalytic activity">
    <reaction evidence="1">
        <text>L-homoserine + ATP = O-phospho-L-homoserine + ADP + H(+)</text>
        <dbReference type="Rhea" id="RHEA:13985"/>
        <dbReference type="ChEBI" id="CHEBI:15378"/>
        <dbReference type="ChEBI" id="CHEBI:30616"/>
        <dbReference type="ChEBI" id="CHEBI:57476"/>
        <dbReference type="ChEBI" id="CHEBI:57590"/>
        <dbReference type="ChEBI" id="CHEBI:456216"/>
        <dbReference type="EC" id="2.7.1.39"/>
    </reaction>
</comment>
<comment type="pathway">
    <text evidence="1">Amino-acid biosynthesis; L-threonine biosynthesis; L-threonine from L-aspartate: step 4/5.</text>
</comment>
<comment type="similarity">
    <text evidence="1">Belongs to the pseudomonas-type ThrB family.</text>
</comment>
<evidence type="ECO:0000255" key="1">
    <source>
        <dbReference type="HAMAP-Rule" id="MF_00301"/>
    </source>
</evidence>
<evidence type="ECO:0007829" key="2">
    <source>
        <dbReference type="PDB" id="2PPQ"/>
    </source>
</evidence>